<proteinExistence type="inferred from homology"/>
<feature type="chain" id="PRO_0000230853" description="Transcriptional repressor NrdR">
    <location>
        <begin position="1"/>
        <end position="171"/>
    </location>
</feature>
<feature type="domain" description="ATP-cone" evidence="1">
    <location>
        <begin position="49"/>
        <end position="139"/>
    </location>
</feature>
<feature type="zinc finger region" evidence="1">
    <location>
        <begin position="3"/>
        <end position="34"/>
    </location>
</feature>
<feature type="region of interest" description="Disordered" evidence="2">
    <location>
        <begin position="148"/>
        <end position="171"/>
    </location>
</feature>
<evidence type="ECO:0000255" key="1">
    <source>
        <dbReference type="HAMAP-Rule" id="MF_00440"/>
    </source>
</evidence>
<evidence type="ECO:0000256" key="2">
    <source>
        <dbReference type="SAM" id="MobiDB-lite"/>
    </source>
</evidence>
<keyword id="KW-0067">ATP-binding</keyword>
<keyword id="KW-0238">DNA-binding</keyword>
<keyword id="KW-0479">Metal-binding</keyword>
<keyword id="KW-0547">Nucleotide-binding</keyword>
<keyword id="KW-1185">Reference proteome</keyword>
<keyword id="KW-0678">Repressor</keyword>
<keyword id="KW-0804">Transcription</keyword>
<keyword id="KW-0805">Transcription regulation</keyword>
<keyword id="KW-0862">Zinc</keyword>
<keyword id="KW-0863">Zinc-finger</keyword>
<dbReference type="EMBL" id="CR555306">
    <property type="protein sequence ID" value="CAI06671.1"/>
    <property type="molecule type" value="Genomic_DNA"/>
</dbReference>
<dbReference type="RefSeq" id="WP_011236401.1">
    <property type="nucleotide sequence ID" value="NC_006513.1"/>
</dbReference>
<dbReference type="SMR" id="Q5P7P0"/>
<dbReference type="STRING" id="76114.ebA1044"/>
<dbReference type="KEGG" id="eba:ebA1044"/>
<dbReference type="eggNOG" id="COG1327">
    <property type="taxonomic scope" value="Bacteria"/>
</dbReference>
<dbReference type="HOGENOM" id="CLU_108412_0_1_4"/>
<dbReference type="OrthoDB" id="9807461at2"/>
<dbReference type="Proteomes" id="UP000006552">
    <property type="component" value="Chromosome"/>
</dbReference>
<dbReference type="GO" id="GO:0005524">
    <property type="term" value="F:ATP binding"/>
    <property type="evidence" value="ECO:0007669"/>
    <property type="project" value="UniProtKB-KW"/>
</dbReference>
<dbReference type="GO" id="GO:0003677">
    <property type="term" value="F:DNA binding"/>
    <property type="evidence" value="ECO:0007669"/>
    <property type="project" value="UniProtKB-KW"/>
</dbReference>
<dbReference type="GO" id="GO:0008270">
    <property type="term" value="F:zinc ion binding"/>
    <property type="evidence" value="ECO:0007669"/>
    <property type="project" value="UniProtKB-UniRule"/>
</dbReference>
<dbReference type="GO" id="GO:0045892">
    <property type="term" value="P:negative regulation of DNA-templated transcription"/>
    <property type="evidence" value="ECO:0007669"/>
    <property type="project" value="UniProtKB-UniRule"/>
</dbReference>
<dbReference type="HAMAP" id="MF_00440">
    <property type="entry name" value="NrdR"/>
    <property type="match status" value="1"/>
</dbReference>
<dbReference type="InterPro" id="IPR005144">
    <property type="entry name" value="ATP-cone_dom"/>
</dbReference>
<dbReference type="InterPro" id="IPR055173">
    <property type="entry name" value="NrdR-like_N"/>
</dbReference>
<dbReference type="InterPro" id="IPR003796">
    <property type="entry name" value="RNR_NrdR-like"/>
</dbReference>
<dbReference type="NCBIfam" id="TIGR00244">
    <property type="entry name" value="transcriptional regulator NrdR"/>
    <property type="match status" value="1"/>
</dbReference>
<dbReference type="PANTHER" id="PTHR30455">
    <property type="entry name" value="TRANSCRIPTIONAL REPRESSOR NRDR"/>
    <property type="match status" value="1"/>
</dbReference>
<dbReference type="PANTHER" id="PTHR30455:SF2">
    <property type="entry name" value="TRANSCRIPTIONAL REPRESSOR NRDR"/>
    <property type="match status" value="1"/>
</dbReference>
<dbReference type="Pfam" id="PF03477">
    <property type="entry name" value="ATP-cone"/>
    <property type="match status" value="1"/>
</dbReference>
<dbReference type="Pfam" id="PF22811">
    <property type="entry name" value="Zn_ribbon_NrdR"/>
    <property type="match status" value="1"/>
</dbReference>
<dbReference type="PROSITE" id="PS51161">
    <property type="entry name" value="ATP_CONE"/>
    <property type="match status" value="1"/>
</dbReference>
<accession>Q5P7P0</accession>
<organism>
    <name type="scientific">Aromatoleum aromaticum (strain DSM 19018 / LMG 30748 / EbN1)</name>
    <name type="common">Azoarcus sp. (strain EbN1)</name>
    <dbReference type="NCBI Taxonomy" id="76114"/>
    <lineage>
        <taxon>Bacteria</taxon>
        <taxon>Pseudomonadati</taxon>
        <taxon>Pseudomonadota</taxon>
        <taxon>Betaproteobacteria</taxon>
        <taxon>Rhodocyclales</taxon>
        <taxon>Rhodocyclaceae</taxon>
        <taxon>Aromatoleum</taxon>
    </lineage>
</organism>
<comment type="function">
    <text evidence="1">Negatively regulates transcription of bacterial ribonucleotide reductase nrd genes and operons by binding to NrdR-boxes.</text>
</comment>
<comment type="cofactor">
    <cofactor evidence="1">
        <name>Zn(2+)</name>
        <dbReference type="ChEBI" id="CHEBI:29105"/>
    </cofactor>
    <text evidence="1">Binds 1 zinc ion.</text>
</comment>
<comment type="similarity">
    <text evidence="1">Belongs to the NrdR family.</text>
</comment>
<sequence length="171" mass="19743">MKCPFCGDPNTQVADTRENEGGEVVRRRRRCPKCDKRFTTYERIDLKMPHIVKRNGNRSEFEHDKLAGSMKLALRKRPVTLEALDAAVDRIEAKLLALGEQEVPSEKVGELVMRELKKLDKVAYIRFASVYRNFADVDEFAEVIREVKARPKRNRPAEPPEPTSENDLFRS</sequence>
<gene>
    <name evidence="1" type="primary">nrdR</name>
    <name type="ordered locus">AZOSEA05490</name>
    <name type="ORF">ebA1044</name>
</gene>
<protein>
    <recommendedName>
        <fullName evidence="1">Transcriptional repressor NrdR</fullName>
    </recommendedName>
</protein>
<reference key="1">
    <citation type="journal article" date="2005" name="Arch. Microbiol.">
        <title>The genome sequence of an anaerobic aromatic-degrading denitrifying bacterium, strain EbN1.</title>
        <authorList>
            <person name="Rabus R."/>
            <person name="Kube M."/>
            <person name="Heider J."/>
            <person name="Beck A."/>
            <person name="Heitmann K."/>
            <person name="Widdel F."/>
            <person name="Reinhardt R."/>
        </authorList>
    </citation>
    <scope>NUCLEOTIDE SEQUENCE [LARGE SCALE GENOMIC DNA]</scope>
    <source>
        <strain>DSM 19018 / LMG 30748 / EbN1</strain>
    </source>
</reference>
<name>NRDR_AROAE</name>